<sequence>MGALTKAEMAERLYEELGLNKREAKELVELFFEEIRHALEDNEQVKLSGFGNFDLRDKRQRPGRNPKTGEEIPITARRVVTFRPGQKLKARVEAYAGTKS</sequence>
<feature type="chain" id="PRO_1000205692" description="Integration host factor subunit alpha">
    <location>
        <begin position="1"/>
        <end position="100"/>
    </location>
</feature>
<feature type="region of interest" description="Disordered" evidence="2">
    <location>
        <begin position="54"/>
        <end position="73"/>
    </location>
</feature>
<protein>
    <recommendedName>
        <fullName evidence="1">Integration host factor subunit alpha</fullName>
        <shortName evidence="1">IHF-alpha</shortName>
    </recommendedName>
</protein>
<gene>
    <name evidence="1" type="primary">ihfA</name>
    <name evidence="1" type="synonym">himA</name>
    <name type="ordered locus">PFLU_4142</name>
</gene>
<reference key="1">
    <citation type="journal article" date="2009" name="Genome Biol.">
        <title>Genomic and genetic analyses of diversity and plant interactions of Pseudomonas fluorescens.</title>
        <authorList>
            <person name="Silby M.W."/>
            <person name="Cerdeno-Tarraga A.M."/>
            <person name="Vernikos G.S."/>
            <person name="Giddens S.R."/>
            <person name="Jackson R.W."/>
            <person name="Preston G.M."/>
            <person name="Zhang X.-X."/>
            <person name="Moon C.D."/>
            <person name="Gehrig S.M."/>
            <person name="Godfrey S.A.C."/>
            <person name="Knight C.G."/>
            <person name="Malone J.G."/>
            <person name="Robinson Z."/>
            <person name="Spiers A.J."/>
            <person name="Harris S."/>
            <person name="Challis G.L."/>
            <person name="Yaxley A.M."/>
            <person name="Harris D."/>
            <person name="Seeger K."/>
            <person name="Murphy L."/>
            <person name="Rutter S."/>
            <person name="Squares R."/>
            <person name="Quail M.A."/>
            <person name="Saunders E."/>
            <person name="Mavromatis K."/>
            <person name="Brettin T.S."/>
            <person name="Bentley S.D."/>
            <person name="Hothersall J."/>
            <person name="Stephens E."/>
            <person name="Thomas C.M."/>
            <person name="Parkhill J."/>
            <person name="Levy S.B."/>
            <person name="Rainey P.B."/>
            <person name="Thomson N.R."/>
        </authorList>
    </citation>
    <scope>NUCLEOTIDE SEQUENCE [LARGE SCALE GENOMIC DNA]</scope>
    <source>
        <strain>SBW25</strain>
    </source>
</reference>
<name>IHFA_PSEFS</name>
<organism>
    <name type="scientific">Pseudomonas fluorescens (strain SBW25)</name>
    <dbReference type="NCBI Taxonomy" id="216595"/>
    <lineage>
        <taxon>Bacteria</taxon>
        <taxon>Pseudomonadati</taxon>
        <taxon>Pseudomonadota</taxon>
        <taxon>Gammaproteobacteria</taxon>
        <taxon>Pseudomonadales</taxon>
        <taxon>Pseudomonadaceae</taxon>
        <taxon>Pseudomonas</taxon>
    </lineage>
</organism>
<comment type="function">
    <text evidence="1">This protein is one of the two subunits of integration host factor, a specific DNA-binding protein that functions in genetic recombination as well as in transcriptional and translational control.</text>
</comment>
<comment type="subunit">
    <text evidence="1">Heterodimer of an alpha and a beta chain.</text>
</comment>
<comment type="similarity">
    <text evidence="1">Belongs to the bacterial histone-like protein family.</text>
</comment>
<keyword id="KW-0233">DNA recombination</keyword>
<keyword id="KW-0238">DNA-binding</keyword>
<keyword id="KW-0804">Transcription</keyword>
<keyword id="KW-0805">Transcription regulation</keyword>
<keyword id="KW-0810">Translation regulation</keyword>
<evidence type="ECO:0000255" key="1">
    <source>
        <dbReference type="HAMAP-Rule" id="MF_00380"/>
    </source>
</evidence>
<evidence type="ECO:0000256" key="2">
    <source>
        <dbReference type="SAM" id="MobiDB-lite"/>
    </source>
</evidence>
<proteinExistence type="inferred from homology"/>
<dbReference type="EMBL" id="AM181176">
    <property type="protein sequence ID" value="CAY50633.1"/>
    <property type="molecule type" value="Genomic_DNA"/>
</dbReference>
<dbReference type="RefSeq" id="WP_002553164.1">
    <property type="nucleotide sequence ID" value="NC_012660.1"/>
</dbReference>
<dbReference type="SMR" id="C3JZN1"/>
<dbReference type="STRING" id="294.SRM1_02095"/>
<dbReference type="GeneID" id="98284088"/>
<dbReference type="eggNOG" id="COG0776">
    <property type="taxonomic scope" value="Bacteria"/>
</dbReference>
<dbReference type="HOGENOM" id="CLU_105066_1_3_6"/>
<dbReference type="OrthoDB" id="9797747at2"/>
<dbReference type="GO" id="GO:0005829">
    <property type="term" value="C:cytosol"/>
    <property type="evidence" value="ECO:0007669"/>
    <property type="project" value="TreeGrafter"/>
</dbReference>
<dbReference type="GO" id="GO:0003677">
    <property type="term" value="F:DNA binding"/>
    <property type="evidence" value="ECO:0007669"/>
    <property type="project" value="UniProtKB-UniRule"/>
</dbReference>
<dbReference type="GO" id="GO:0030527">
    <property type="term" value="F:structural constituent of chromatin"/>
    <property type="evidence" value="ECO:0007669"/>
    <property type="project" value="InterPro"/>
</dbReference>
<dbReference type="GO" id="GO:0006310">
    <property type="term" value="P:DNA recombination"/>
    <property type="evidence" value="ECO:0007669"/>
    <property type="project" value="UniProtKB-UniRule"/>
</dbReference>
<dbReference type="GO" id="GO:0009893">
    <property type="term" value="P:positive regulation of metabolic process"/>
    <property type="evidence" value="ECO:0007669"/>
    <property type="project" value="UniProtKB-ARBA"/>
</dbReference>
<dbReference type="GO" id="GO:0006355">
    <property type="term" value="P:regulation of DNA-templated transcription"/>
    <property type="evidence" value="ECO:0007669"/>
    <property type="project" value="UniProtKB-UniRule"/>
</dbReference>
<dbReference type="GO" id="GO:0006417">
    <property type="term" value="P:regulation of translation"/>
    <property type="evidence" value="ECO:0007669"/>
    <property type="project" value="UniProtKB-UniRule"/>
</dbReference>
<dbReference type="CDD" id="cd13835">
    <property type="entry name" value="IHF_A"/>
    <property type="match status" value="1"/>
</dbReference>
<dbReference type="FunFam" id="4.10.520.10:FF:000002">
    <property type="entry name" value="Integration host factor subunit alpha"/>
    <property type="match status" value="1"/>
</dbReference>
<dbReference type="Gene3D" id="4.10.520.10">
    <property type="entry name" value="IHF-like DNA-binding proteins"/>
    <property type="match status" value="1"/>
</dbReference>
<dbReference type="HAMAP" id="MF_00380">
    <property type="entry name" value="IHF_alpha"/>
    <property type="match status" value="1"/>
</dbReference>
<dbReference type="InterPro" id="IPR000119">
    <property type="entry name" value="Hist_DNA-bd"/>
</dbReference>
<dbReference type="InterPro" id="IPR020816">
    <property type="entry name" value="Histone-like_DNA-bd_CS"/>
</dbReference>
<dbReference type="InterPro" id="IPR010992">
    <property type="entry name" value="IHF-like_DNA-bd_dom_sf"/>
</dbReference>
<dbReference type="InterPro" id="IPR005684">
    <property type="entry name" value="IHF_alpha"/>
</dbReference>
<dbReference type="NCBIfam" id="TIGR00987">
    <property type="entry name" value="himA"/>
    <property type="match status" value="1"/>
</dbReference>
<dbReference type="NCBIfam" id="NF001401">
    <property type="entry name" value="PRK00285.1"/>
    <property type="match status" value="1"/>
</dbReference>
<dbReference type="PANTHER" id="PTHR33175">
    <property type="entry name" value="DNA-BINDING PROTEIN HU"/>
    <property type="match status" value="1"/>
</dbReference>
<dbReference type="PANTHER" id="PTHR33175:SF2">
    <property type="entry name" value="INTEGRATION HOST FACTOR SUBUNIT ALPHA"/>
    <property type="match status" value="1"/>
</dbReference>
<dbReference type="Pfam" id="PF00216">
    <property type="entry name" value="Bac_DNA_binding"/>
    <property type="match status" value="1"/>
</dbReference>
<dbReference type="PRINTS" id="PR01727">
    <property type="entry name" value="DNABINDINGHU"/>
</dbReference>
<dbReference type="SMART" id="SM00411">
    <property type="entry name" value="BHL"/>
    <property type="match status" value="1"/>
</dbReference>
<dbReference type="SUPFAM" id="SSF47729">
    <property type="entry name" value="IHF-like DNA-binding proteins"/>
    <property type="match status" value="1"/>
</dbReference>
<dbReference type="PROSITE" id="PS00045">
    <property type="entry name" value="HISTONE_LIKE"/>
    <property type="match status" value="1"/>
</dbReference>
<accession>C3JZN1</accession>